<comment type="function">
    <text evidence="2">Involved in base excision repair of DNA damaged by oxidation or by mutagenic agents. Acts as a DNA glycosylase that recognizes and removes damaged bases. Has a preference for oxidized purines, such as 7,8-dihydro-8-oxoguanine (8-oxoG). Has AP (apurinic/apyrimidinic) lyase activity and introduces nicks in the DNA strand. Cleaves the DNA backbone by beta-delta elimination to generate a single-strand break at the site of the removed base with both 3'- and 5'-phosphates.</text>
</comment>
<comment type="catalytic activity">
    <reaction evidence="2">
        <text>Hydrolysis of DNA containing ring-opened 7-methylguanine residues, releasing 2,6-diamino-4-hydroxy-5-(N-methyl)formamidopyrimidine.</text>
        <dbReference type="EC" id="3.2.2.23"/>
    </reaction>
</comment>
<comment type="catalytic activity">
    <reaction evidence="2">
        <text>2'-deoxyribonucleotide-(2'-deoxyribose 5'-phosphate)-2'-deoxyribonucleotide-DNA = a 3'-end 2'-deoxyribonucleotide-(2,3-dehydro-2,3-deoxyribose 5'-phosphate)-DNA + a 5'-end 5'-phospho-2'-deoxyribonucleoside-DNA + H(+)</text>
        <dbReference type="Rhea" id="RHEA:66592"/>
        <dbReference type="Rhea" id="RHEA-COMP:13180"/>
        <dbReference type="Rhea" id="RHEA-COMP:16897"/>
        <dbReference type="Rhea" id="RHEA-COMP:17067"/>
        <dbReference type="ChEBI" id="CHEBI:15378"/>
        <dbReference type="ChEBI" id="CHEBI:136412"/>
        <dbReference type="ChEBI" id="CHEBI:157695"/>
        <dbReference type="ChEBI" id="CHEBI:167181"/>
        <dbReference type="EC" id="4.2.99.18"/>
    </reaction>
</comment>
<comment type="cofactor">
    <cofactor evidence="2">
        <name>Zn(2+)</name>
        <dbReference type="ChEBI" id="CHEBI:29105"/>
    </cofactor>
    <text evidence="2">Binds 1 zinc ion per subunit.</text>
</comment>
<comment type="subunit">
    <text evidence="2">Monomer.</text>
</comment>
<comment type="similarity">
    <text evidence="2">Belongs to the FPG family.</text>
</comment>
<dbReference type="EC" id="3.2.2.23" evidence="2"/>
<dbReference type="EC" id="4.2.99.18" evidence="2"/>
<dbReference type="EMBL" id="CP001150">
    <property type="protein sequence ID" value="ACM02599.1"/>
    <property type="molecule type" value="Genomic_DNA"/>
</dbReference>
<dbReference type="RefSeq" id="WP_015921630.1">
    <property type="nucleotide sequence ID" value="NC_011963.1"/>
</dbReference>
<dbReference type="SMR" id="B9KQJ9"/>
<dbReference type="GeneID" id="67448110"/>
<dbReference type="KEGG" id="rsk:RSKD131_2739"/>
<dbReference type="HOGENOM" id="CLU_038423_1_1_5"/>
<dbReference type="GO" id="GO:0034039">
    <property type="term" value="F:8-oxo-7,8-dihydroguanine DNA N-glycosylase activity"/>
    <property type="evidence" value="ECO:0007669"/>
    <property type="project" value="TreeGrafter"/>
</dbReference>
<dbReference type="GO" id="GO:0140078">
    <property type="term" value="F:class I DNA-(apurinic or apyrimidinic site) endonuclease activity"/>
    <property type="evidence" value="ECO:0007669"/>
    <property type="project" value="UniProtKB-EC"/>
</dbReference>
<dbReference type="GO" id="GO:0003684">
    <property type="term" value="F:damaged DNA binding"/>
    <property type="evidence" value="ECO:0007669"/>
    <property type="project" value="InterPro"/>
</dbReference>
<dbReference type="GO" id="GO:0008270">
    <property type="term" value="F:zinc ion binding"/>
    <property type="evidence" value="ECO:0007669"/>
    <property type="project" value="UniProtKB-UniRule"/>
</dbReference>
<dbReference type="GO" id="GO:0006284">
    <property type="term" value="P:base-excision repair"/>
    <property type="evidence" value="ECO:0007669"/>
    <property type="project" value="InterPro"/>
</dbReference>
<dbReference type="CDD" id="cd08966">
    <property type="entry name" value="EcFpg-like_N"/>
    <property type="match status" value="1"/>
</dbReference>
<dbReference type="FunFam" id="1.10.8.50:FF:000003">
    <property type="entry name" value="Formamidopyrimidine-DNA glycosylase"/>
    <property type="match status" value="1"/>
</dbReference>
<dbReference type="Gene3D" id="1.10.8.50">
    <property type="match status" value="1"/>
</dbReference>
<dbReference type="Gene3D" id="3.20.190.10">
    <property type="entry name" value="MutM-like, N-terminal"/>
    <property type="match status" value="1"/>
</dbReference>
<dbReference type="HAMAP" id="MF_00103">
    <property type="entry name" value="Fapy_DNA_glycosyl"/>
    <property type="match status" value="1"/>
</dbReference>
<dbReference type="InterPro" id="IPR015886">
    <property type="entry name" value="DNA_glyclase/AP_lyase_DNA-bd"/>
</dbReference>
<dbReference type="InterPro" id="IPR020629">
    <property type="entry name" value="Formamido-pyr_DNA_Glyclase"/>
</dbReference>
<dbReference type="InterPro" id="IPR012319">
    <property type="entry name" value="FPG_cat"/>
</dbReference>
<dbReference type="InterPro" id="IPR035937">
    <property type="entry name" value="MutM-like_N-ter"/>
</dbReference>
<dbReference type="InterPro" id="IPR010979">
    <property type="entry name" value="Ribosomal_uS13-like_H2TH"/>
</dbReference>
<dbReference type="InterPro" id="IPR000214">
    <property type="entry name" value="Znf_DNA_glyclase/AP_lyase"/>
</dbReference>
<dbReference type="NCBIfam" id="TIGR00577">
    <property type="entry name" value="fpg"/>
    <property type="match status" value="1"/>
</dbReference>
<dbReference type="NCBIfam" id="NF002211">
    <property type="entry name" value="PRK01103.1"/>
    <property type="match status" value="1"/>
</dbReference>
<dbReference type="PANTHER" id="PTHR22993">
    <property type="entry name" value="FORMAMIDOPYRIMIDINE-DNA GLYCOSYLASE"/>
    <property type="match status" value="1"/>
</dbReference>
<dbReference type="PANTHER" id="PTHR22993:SF9">
    <property type="entry name" value="FORMAMIDOPYRIMIDINE-DNA GLYCOSYLASE"/>
    <property type="match status" value="1"/>
</dbReference>
<dbReference type="Pfam" id="PF01149">
    <property type="entry name" value="Fapy_DNA_glyco"/>
    <property type="match status" value="1"/>
</dbReference>
<dbReference type="Pfam" id="PF06831">
    <property type="entry name" value="H2TH"/>
    <property type="match status" value="1"/>
</dbReference>
<dbReference type="SMART" id="SM00898">
    <property type="entry name" value="Fapy_DNA_glyco"/>
    <property type="match status" value="1"/>
</dbReference>
<dbReference type="SMART" id="SM01232">
    <property type="entry name" value="H2TH"/>
    <property type="match status" value="1"/>
</dbReference>
<dbReference type="SUPFAM" id="SSF57716">
    <property type="entry name" value="Glucocorticoid receptor-like (DNA-binding domain)"/>
    <property type="match status" value="1"/>
</dbReference>
<dbReference type="SUPFAM" id="SSF81624">
    <property type="entry name" value="N-terminal domain of MutM-like DNA repair proteins"/>
    <property type="match status" value="1"/>
</dbReference>
<dbReference type="SUPFAM" id="SSF46946">
    <property type="entry name" value="S13-like H2TH domain"/>
    <property type="match status" value="1"/>
</dbReference>
<dbReference type="PROSITE" id="PS51068">
    <property type="entry name" value="FPG_CAT"/>
    <property type="match status" value="1"/>
</dbReference>
<dbReference type="PROSITE" id="PS51066">
    <property type="entry name" value="ZF_FPG_2"/>
    <property type="match status" value="1"/>
</dbReference>
<name>FPG_CERSK</name>
<proteinExistence type="inferred from homology"/>
<evidence type="ECO:0000250" key="1"/>
<evidence type="ECO:0000255" key="2">
    <source>
        <dbReference type="HAMAP-Rule" id="MF_00103"/>
    </source>
</evidence>
<accession>B9KQJ9</accession>
<organism>
    <name type="scientific">Cereibacter sphaeroides (strain KD131 / KCTC 12085)</name>
    <name type="common">Rhodobacter sphaeroides</name>
    <dbReference type="NCBI Taxonomy" id="557760"/>
    <lineage>
        <taxon>Bacteria</taxon>
        <taxon>Pseudomonadati</taxon>
        <taxon>Pseudomonadota</taxon>
        <taxon>Alphaproteobacteria</taxon>
        <taxon>Rhodobacterales</taxon>
        <taxon>Paracoccaceae</taxon>
        <taxon>Cereibacter</taxon>
    </lineage>
</organism>
<keyword id="KW-0227">DNA damage</keyword>
<keyword id="KW-0234">DNA repair</keyword>
<keyword id="KW-0238">DNA-binding</keyword>
<keyword id="KW-0326">Glycosidase</keyword>
<keyword id="KW-0378">Hydrolase</keyword>
<keyword id="KW-0456">Lyase</keyword>
<keyword id="KW-0479">Metal-binding</keyword>
<keyword id="KW-0511">Multifunctional enzyme</keyword>
<keyword id="KW-0862">Zinc</keyword>
<keyword id="KW-0863">Zinc-finger</keyword>
<feature type="initiator methionine" description="Removed" evidence="1">
    <location>
        <position position="1"/>
    </location>
</feature>
<feature type="chain" id="PRO_1000118900" description="Formamidopyrimidine-DNA glycosylase">
    <location>
        <begin position="2"/>
        <end position="283"/>
    </location>
</feature>
<feature type="zinc finger region" description="FPG-type" evidence="2">
    <location>
        <begin position="247"/>
        <end position="283"/>
    </location>
</feature>
<feature type="active site" description="Schiff-base intermediate with DNA" evidence="2">
    <location>
        <position position="2"/>
    </location>
</feature>
<feature type="active site" description="Proton donor" evidence="2">
    <location>
        <position position="3"/>
    </location>
</feature>
<feature type="active site" description="Proton donor; for beta-elimination activity" evidence="2">
    <location>
        <position position="58"/>
    </location>
</feature>
<feature type="active site" description="Proton donor; for delta-elimination activity" evidence="2">
    <location>
        <position position="273"/>
    </location>
</feature>
<feature type="binding site" evidence="2">
    <location>
        <position position="100"/>
    </location>
    <ligand>
        <name>DNA</name>
        <dbReference type="ChEBI" id="CHEBI:16991"/>
    </ligand>
</feature>
<feature type="binding site" evidence="2">
    <location>
        <position position="119"/>
    </location>
    <ligand>
        <name>DNA</name>
        <dbReference type="ChEBI" id="CHEBI:16991"/>
    </ligand>
</feature>
<feature type="binding site" evidence="2">
    <location>
        <position position="162"/>
    </location>
    <ligand>
        <name>DNA</name>
        <dbReference type="ChEBI" id="CHEBI:16991"/>
    </ligand>
</feature>
<gene>
    <name evidence="2" type="primary">mutM</name>
    <name evidence="2" type="synonym">fpg</name>
    <name type="ordered locus">RSKD131_2739</name>
</gene>
<sequence>MPELPEVETVRRGLEPAMAGRLIAEARVNRADLRWPFPPRMAERLTGQRVLRLRRRSKYILADLSGGQSLLIHLGMSGRMLVSGAQLGEFFHDHPAPSRHDHVVLEMEGGARITFNDARRFGAMDLVATEAAEAHPLLAVLGPEPLGNAFDGAYLAARLEGRRTPIKAALLDQRIVAGLGNIYVCEVLFRAGLAPGRLAGSLSRAESEGLVPLIREVLLEAIEAGGSSLRDYRQADGELGYFQHTFRVYGREGLPCVTPGCSGTVGRIVQSGRSSFHCPLCQR</sequence>
<protein>
    <recommendedName>
        <fullName evidence="2">Formamidopyrimidine-DNA glycosylase</fullName>
        <shortName evidence="2">Fapy-DNA glycosylase</shortName>
        <ecNumber evidence="2">3.2.2.23</ecNumber>
    </recommendedName>
    <alternativeName>
        <fullName evidence="2">DNA-(apurinic or apyrimidinic site) lyase MutM</fullName>
        <shortName evidence="2">AP lyase MutM</shortName>
        <ecNumber evidence="2">4.2.99.18</ecNumber>
    </alternativeName>
</protein>
<reference key="1">
    <citation type="journal article" date="2009" name="J. Bacteriol.">
        <title>Complete genome sequence of Rhodobacter sphaeroides KD131.</title>
        <authorList>
            <person name="Lim S.-K."/>
            <person name="Kim S.J."/>
            <person name="Cha S.H."/>
            <person name="Oh Y.-K."/>
            <person name="Rhee H.-J."/>
            <person name="Kim M.-S."/>
            <person name="Lee J.K."/>
        </authorList>
    </citation>
    <scope>NUCLEOTIDE SEQUENCE [LARGE SCALE GENOMIC DNA]</scope>
    <source>
        <strain>KD131 / KCTC 12085</strain>
    </source>
</reference>